<comment type="function">
    <text>This is a larval (tadpole) beta-globin.</text>
</comment>
<comment type="subunit">
    <text>Heterotetramer of two alpha chains and two beta chains.</text>
</comment>
<comment type="tissue specificity">
    <text>Red blood cells.</text>
</comment>
<comment type="similarity">
    <text evidence="1">Belongs to the globin family.</text>
</comment>
<evidence type="ECO:0000255" key="1">
    <source>
        <dbReference type="PROSITE-ProRule" id="PRU00238"/>
    </source>
</evidence>
<evidence type="ECO:0000305" key="2"/>
<sequence length="147" mass="16047">MVHLSADEKSAINAVWSKVNIENDGHDALTRLLVVFPWTQRYFSSFGNLSNVAAISGNAKVRAHGKKVLSAVDESIHHLDDIKNFLSVLSTKHAEELHVDPENFKRLADVLVIVLAGKLGAAFTPQVQAAWEKFSAGLVAALSHGYF</sequence>
<organism>
    <name type="scientific">Xenopus laevis</name>
    <name type="common">African clawed frog</name>
    <dbReference type="NCBI Taxonomy" id="8355"/>
    <lineage>
        <taxon>Eukaryota</taxon>
        <taxon>Metazoa</taxon>
        <taxon>Chordata</taxon>
        <taxon>Craniata</taxon>
        <taxon>Vertebrata</taxon>
        <taxon>Euteleostomi</taxon>
        <taxon>Amphibia</taxon>
        <taxon>Batrachia</taxon>
        <taxon>Anura</taxon>
        <taxon>Pipoidea</taxon>
        <taxon>Pipidae</taxon>
        <taxon>Xenopodinae</taxon>
        <taxon>Xenopus</taxon>
        <taxon>Xenopus</taxon>
    </lineage>
</organism>
<accession>P02137</accession>
<accession>Q5D093</accession>
<name>HBBL_XENLA</name>
<protein>
    <recommendedName>
        <fullName>Hemoglobin larval subunit beta-1</fullName>
    </recommendedName>
    <alternativeName>
        <fullName>Beta-1-globin</fullName>
    </alternativeName>
    <alternativeName>
        <fullName>Hemoglobin beta-1 chain, larval</fullName>
    </alternativeName>
</protein>
<dbReference type="EMBL" id="X03143">
    <property type="protein sequence ID" value="CAA26915.1"/>
    <property type="molecule type" value="mRNA"/>
</dbReference>
<dbReference type="EMBL" id="X01084">
    <property type="protein sequence ID" value="CAA25562.1"/>
    <property type="molecule type" value="Genomic_DNA"/>
</dbReference>
<dbReference type="EMBL" id="BC053807">
    <property type="protein sequence ID" value="AAH53807.1"/>
    <property type="molecule type" value="mRNA"/>
</dbReference>
<dbReference type="PIR" id="A02457">
    <property type="entry name" value="HBXLT1"/>
</dbReference>
<dbReference type="PIR" id="I51600">
    <property type="entry name" value="I51600"/>
</dbReference>
<dbReference type="RefSeq" id="NP_001079742.1">
    <property type="nucleotide sequence ID" value="NM_001086273.2"/>
</dbReference>
<dbReference type="SMR" id="P02137"/>
<dbReference type="DNASU" id="379431"/>
<dbReference type="GeneID" id="379431"/>
<dbReference type="KEGG" id="xla:379431"/>
<dbReference type="AGR" id="Xenbase:XB-GENE-5844733"/>
<dbReference type="CTD" id="379431"/>
<dbReference type="Xenbase" id="XB-GENE-5844733">
    <property type="gene designation" value="hbd.S"/>
</dbReference>
<dbReference type="OMA" id="LWGQIDV"/>
<dbReference type="OrthoDB" id="9886081at2759"/>
<dbReference type="Proteomes" id="UP000186698">
    <property type="component" value="Chromosome 9_10S"/>
</dbReference>
<dbReference type="Bgee" id="379431">
    <property type="expression patterns" value="Expressed in internal ear and 8 other cell types or tissues"/>
</dbReference>
<dbReference type="GO" id="GO:0072562">
    <property type="term" value="C:blood microparticle"/>
    <property type="evidence" value="ECO:0007669"/>
    <property type="project" value="TreeGrafter"/>
</dbReference>
<dbReference type="GO" id="GO:0031838">
    <property type="term" value="C:haptoglobin-hemoglobin complex"/>
    <property type="evidence" value="ECO:0000318"/>
    <property type="project" value="GO_Central"/>
</dbReference>
<dbReference type="GO" id="GO:0005833">
    <property type="term" value="C:hemoglobin complex"/>
    <property type="evidence" value="ECO:0000318"/>
    <property type="project" value="GO_Central"/>
</dbReference>
<dbReference type="GO" id="GO:0031720">
    <property type="term" value="F:haptoglobin binding"/>
    <property type="evidence" value="ECO:0007669"/>
    <property type="project" value="TreeGrafter"/>
</dbReference>
<dbReference type="GO" id="GO:0020037">
    <property type="term" value="F:heme binding"/>
    <property type="evidence" value="ECO:0000318"/>
    <property type="project" value="GO_Central"/>
</dbReference>
<dbReference type="GO" id="GO:0046872">
    <property type="term" value="F:metal ion binding"/>
    <property type="evidence" value="ECO:0007669"/>
    <property type="project" value="UniProtKB-KW"/>
</dbReference>
<dbReference type="GO" id="GO:0043177">
    <property type="term" value="F:organic acid binding"/>
    <property type="evidence" value="ECO:0007669"/>
    <property type="project" value="TreeGrafter"/>
</dbReference>
<dbReference type="GO" id="GO:0019825">
    <property type="term" value="F:oxygen binding"/>
    <property type="evidence" value="ECO:0000318"/>
    <property type="project" value="GO_Central"/>
</dbReference>
<dbReference type="GO" id="GO:0005344">
    <property type="term" value="F:oxygen carrier activity"/>
    <property type="evidence" value="ECO:0000318"/>
    <property type="project" value="GO_Central"/>
</dbReference>
<dbReference type="GO" id="GO:0004601">
    <property type="term" value="F:peroxidase activity"/>
    <property type="evidence" value="ECO:0007669"/>
    <property type="project" value="TreeGrafter"/>
</dbReference>
<dbReference type="GO" id="GO:0042744">
    <property type="term" value="P:hydrogen peroxide catabolic process"/>
    <property type="evidence" value="ECO:0000318"/>
    <property type="project" value="GO_Central"/>
</dbReference>
<dbReference type="CDD" id="cd08925">
    <property type="entry name" value="Hb-beta-like"/>
    <property type="match status" value="1"/>
</dbReference>
<dbReference type="FunFam" id="1.10.490.10:FF:000001">
    <property type="entry name" value="Hemoglobin subunit beta"/>
    <property type="match status" value="1"/>
</dbReference>
<dbReference type="Gene3D" id="1.10.490.10">
    <property type="entry name" value="Globins"/>
    <property type="match status" value="1"/>
</dbReference>
<dbReference type="InterPro" id="IPR000971">
    <property type="entry name" value="Globin"/>
</dbReference>
<dbReference type="InterPro" id="IPR009050">
    <property type="entry name" value="Globin-like_sf"/>
</dbReference>
<dbReference type="InterPro" id="IPR012292">
    <property type="entry name" value="Globin/Proto"/>
</dbReference>
<dbReference type="InterPro" id="IPR002337">
    <property type="entry name" value="Hemoglobin_b"/>
</dbReference>
<dbReference type="InterPro" id="IPR050056">
    <property type="entry name" value="Hemoglobin_oxygen_transport"/>
</dbReference>
<dbReference type="PANTHER" id="PTHR11442">
    <property type="entry name" value="HEMOGLOBIN FAMILY MEMBER"/>
    <property type="match status" value="1"/>
</dbReference>
<dbReference type="PANTHER" id="PTHR11442:SF7">
    <property type="entry name" value="HEMOGLOBIN SUBUNIT EPSILON"/>
    <property type="match status" value="1"/>
</dbReference>
<dbReference type="Pfam" id="PF00042">
    <property type="entry name" value="Globin"/>
    <property type="match status" value="1"/>
</dbReference>
<dbReference type="PRINTS" id="PR00814">
    <property type="entry name" value="BETAHAEM"/>
</dbReference>
<dbReference type="SUPFAM" id="SSF46458">
    <property type="entry name" value="Globin-like"/>
    <property type="match status" value="1"/>
</dbReference>
<dbReference type="PROSITE" id="PS01033">
    <property type="entry name" value="GLOBIN"/>
    <property type="match status" value="1"/>
</dbReference>
<proteinExistence type="evidence at transcript level"/>
<keyword id="KW-0349">Heme</keyword>
<keyword id="KW-0408">Iron</keyword>
<keyword id="KW-0479">Metal-binding</keyword>
<keyword id="KW-0561">Oxygen transport</keyword>
<keyword id="KW-1185">Reference proteome</keyword>
<keyword id="KW-0813">Transport</keyword>
<feature type="initiator methionine" description="Removed">
    <location>
        <position position="1"/>
    </location>
</feature>
<feature type="chain" id="PRO_0000053157" description="Hemoglobin larval subunit beta-1">
    <location>
        <begin position="2"/>
        <end position="147"/>
    </location>
</feature>
<feature type="domain" description="Globin" evidence="1">
    <location>
        <begin position="3"/>
        <end position="147"/>
    </location>
</feature>
<feature type="binding site" description="distal binding residue">
    <location>
        <position position="64"/>
    </location>
    <ligand>
        <name>heme b</name>
        <dbReference type="ChEBI" id="CHEBI:60344"/>
    </ligand>
    <ligandPart>
        <name>Fe</name>
        <dbReference type="ChEBI" id="CHEBI:18248"/>
    </ligandPart>
</feature>
<feature type="binding site" description="proximal binding residue">
    <location>
        <position position="93"/>
    </location>
    <ligand>
        <name>heme b</name>
        <dbReference type="ChEBI" id="CHEBI:60344"/>
    </ligand>
    <ligandPart>
        <name>Fe</name>
        <dbReference type="ChEBI" id="CHEBI:18248"/>
    </ligandPart>
</feature>
<feature type="sequence conflict" description="In Ref. 1." evidence="2" ref="1">
    <original>A</original>
    <variation>G</variation>
    <location>
        <position position="108"/>
    </location>
</feature>
<reference key="1">
    <citation type="journal article" date="1983" name="J. Biol. Chem.">
        <title>The nucleotide sequence of the mRNA encoding a tadpole beta-globin polypeptide of Xenopus laevis.</title>
        <authorList>
            <person name="Banville D."/>
            <person name="Kay R.M."/>
            <person name="Harris R."/>
            <person name="Williams J.G."/>
        </authorList>
    </citation>
    <scope>NUCLEOTIDE SEQUENCE [MRNA]</scope>
</reference>
<reference key="2">
    <citation type="journal article" date="1984" name="Nucleic Acids Res.">
        <title>The primary structure of the larval beta 1-globin gene of Xenopus laevis and its flanking regions.</title>
        <authorList>
            <person name="Meyerhof W."/>
            <person name="Klinger-Mitropoulos S."/>
            <person name="Stalder J."/>
            <person name="Weber R."/>
            <person name="Knoechel W."/>
        </authorList>
    </citation>
    <scope>NUCLEOTIDE SEQUENCE [GENOMIC DNA]</scope>
</reference>
<reference key="3">
    <citation type="journal article" date="1985" name="Nucleic Acids Res.">
        <title>Comparative nucleotide sequence analysis of two types of larval beta-globin mRNAs of Xenopus laevis.</title>
        <authorList>
            <person name="Knoechel W."/>
            <person name="Meyerhof W."/>
            <person name="Stalder J."/>
            <person name="Weber R."/>
        </authorList>
    </citation>
    <scope>NUCLEOTIDE SEQUENCE [MRNA]</scope>
</reference>
<reference key="4">
    <citation type="submission" date="2003-06" db="EMBL/GenBank/DDBJ databases">
        <authorList>
            <consortium name="NIH - Xenopus Gene Collection (XGC) project"/>
        </authorList>
    </citation>
    <scope>NUCLEOTIDE SEQUENCE [LARGE SCALE MRNA]</scope>
</reference>